<evidence type="ECO:0000255" key="1">
    <source>
        <dbReference type="HAMAP-Rule" id="MF_00115"/>
    </source>
</evidence>
<organism>
    <name type="scientific">Leptothrix cholodnii (strain ATCC 51168 / LMG 8142 / SP-6)</name>
    <name type="common">Leptothrix discophora (strain SP-6)</name>
    <dbReference type="NCBI Taxonomy" id="395495"/>
    <lineage>
        <taxon>Bacteria</taxon>
        <taxon>Pseudomonadati</taxon>
        <taxon>Pseudomonadota</taxon>
        <taxon>Betaproteobacteria</taxon>
        <taxon>Burkholderiales</taxon>
        <taxon>Sphaerotilaceae</taxon>
        <taxon>Leptothrix</taxon>
    </lineage>
</organism>
<gene>
    <name evidence="1" type="primary">mscL</name>
    <name type="ordered locus">Lcho_0929</name>
</gene>
<feature type="chain" id="PRO_1000094902" description="Large-conductance mechanosensitive channel">
    <location>
        <begin position="1"/>
        <end position="140"/>
    </location>
</feature>
<feature type="transmembrane region" description="Helical" evidence="1">
    <location>
        <begin position="21"/>
        <end position="41"/>
    </location>
</feature>
<feature type="transmembrane region" description="Helical" evidence="1">
    <location>
        <begin position="82"/>
        <end position="102"/>
    </location>
</feature>
<reference key="1">
    <citation type="submission" date="2008-03" db="EMBL/GenBank/DDBJ databases">
        <title>Complete sequence of Leptothrix cholodnii SP-6.</title>
        <authorList>
            <consortium name="US DOE Joint Genome Institute"/>
            <person name="Copeland A."/>
            <person name="Lucas S."/>
            <person name="Lapidus A."/>
            <person name="Glavina del Rio T."/>
            <person name="Dalin E."/>
            <person name="Tice H."/>
            <person name="Bruce D."/>
            <person name="Goodwin L."/>
            <person name="Pitluck S."/>
            <person name="Chertkov O."/>
            <person name="Brettin T."/>
            <person name="Detter J.C."/>
            <person name="Han C."/>
            <person name="Kuske C.R."/>
            <person name="Schmutz J."/>
            <person name="Larimer F."/>
            <person name="Land M."/>
            <person name="Hauser L."/>
            <person name="Kyrpides N."/>
            <person name="Lykidis A."/>
            <person name="Emerson D."/>
            <person name="Richardson P."/>
        </authorList>
    </citation>
    <scope>NUCLEOTIDE SEQUENCE [LARGE SCALE GENOMIC DNA]</scope>
    <source>
        <strain>ATCC 51168 / LMG 8142 / SP-6</strain>
    </source>
</reference>
<name>MSCL_LEPCP</name>
<keyword id="KW-0997">Cell inner membrane</keyword>
<keyword id="KW-1003">Cell membrane</keyword>
<keyword id="KW-0407">Ion channel</keyword>
<keyword id="KW-0406">Ion transport</keyword>
<keyword id="KW-0472">Membrane</keyword>
<keyword id="KW-1185">Reference proteome</keyword>
<keyword id="KW-0812">Transmembrane</keyword>
<keyword id="KW-1133">Transmembrane helix</keyword>
<keyword id="KW-0813">Transport</keyword>
<proteinExistence type="inferred from homology"/>
<protein>
    <recommendedName>
        <fullName evidence="1">Large-conductance mechanosensitive channel</fullName>
    </recommendedName>
</protein>
<accession>B1Y2I5</accession>
<comment type="function">
    <text evidence="1">Channel that opens in response to stretch forces in the membrane lipid bilayer. May participate in the regulation of osmotic pressure changes within the cell.</text>
</comment>
<comment type="subunit">
    <text evidence="1">Homopentamer.</text>
</comment>
<comment type="subcellular location">
    <subcellularLocation>
        <location evidence="1">Cell inner membrane</location>
        <topology evidence="1">Multi-pass membrane protein</topology>
    </subcellularLocation>
</comment>
<comment type="similarity">
    <text evidence="1">Belongs to the MscL family.</text>
</comment>
<dbReference type="EMBL" id="CP001013">
    <property type="protein sequence ID" value="ACB33201.1"/>
    <property type="molecule type" value="Genomic_DNA"/>
</dbReference>
<dbReference type="RefSeq" id="WP_012345963.1">
    <property type="nucleotide sequence ID" value="NC_010524.1"/>
</dbReference>
<dbReference type="SMR" id="B1Y2I5"/>
<dbReference type="STRING" id="395495.Lcho_0929"/>
<dbReference type="KEGG" id="lch:Lcho_0929"/>
<dbReference type="eggNOG" id="COG1970">
    <property type="taxonomic scope" value="Bacteria"/>
</dbReference>
<dbReference type="HOGENOM" id="CLU_095787_0_1_4"/>
<dbReference type="OrthoDB" id="9810350at2"/>
<dbReference type="Proteomes" id="UP000001693">
    <property type="component" value="Chromosome"/>
</dbReference>
<dbReference type="GO" id="GO:0005886">
    <property type="term" value="C:plasma membrane"/>
    <property type="evidence" value="ECO:0007669"/>
    <property type="project" value="UniProtKB-SubCell"/>
</dbReference>
<dbReference type="GO" id="GO:0008381">
    <property type="term" value="F:mechanosensitive monoatomic ion channel activity"/>
    <property type="evidence" value="ECO:0007669"/>
    <property type="project" value="UniProtKB-UniRule"/>
</dbReference>
<dbReference type="Gene3D" id="1.10.1200.120">
    <property type="entry name" value="Large-conductance mechanosensitive channel, MscL, domain 1"/>
    <property type="match status" value="1"/>
</dbReference>
<dbReference type="HAMAP" id="MF_00115">
    <property type="entry name" value="MscL"/>
    <property type="match status" value="1"/>
</dbReference>
<dbReference type="InterPro" id="IPR019823">
    <property type="entry name" value="Mechanosensitive_channel_CS"/>
</dbReference>
<dbReference type="InterPro" id="IPR001185">
    <property type="entry name" value="MS_channel"/>
</dbReference>
<dbReference type="InterPro" id="IPR037673">
    <property type="entry name" value="MSC/AndL"/>
</dbReference>
<dbReference type="InterPro" id="IPR036019">
    <property type="entry name" value="MscL_channel"/>
</dbReference>
<dbReference type="NCBIfam" id="TIGR00220">
    <property type="entry name" value="mscL"/>
    <property type="match status" value="1"/>
</dbReference>
<dbReference type="NCBIfam" id="NF001843">
    <property type="entry name" value="PRK00567.1-4"/>
    <property type="match status" value="1"/>
</dbReference>
<dbReference type="NCBIfam" id="NF010557">
    <property type="entry name" value="PRK13952.1"/>
    <property type="match status" value="1"/>
</dbReference>
<dbReference type="PANTHER" id="PTHR30266:SF2">
    <property type="entry name" value="LARGE-CONDUCTANCE MECHANOSENSITIVE CHANNEL"/>
    <property type="match status" value="1"/>
</dbReference>
<dbReference type="PANTHER" id="PTHR30266">
    <property type="entry name" value="MECHANOSENSITIVE CHANNEL MSCL"/>
    <property type="match status" value="1"/>
</dbReference>
<dbReference type="Pfam" id="PF01741">
    <property type="entry name" value="MscL"/>
    <property type="match status" value="1"/>
</dbReference>
<dbReference type="PRINTS" id="PR01264">
    <property type="entry name" value="MECHCHANNEL"/>
</dbReference>
<dbReference type="SUPFAM" id="SSF81330">
    <property type="entry name" value="Gated mechanosensitive channel"/>
    <property type="match status" value="1"/>
</dbReference>
<dbReference type="PROSITE" id="PS01327">
    <property type="entry name" value="MSCL"/>
    <property type="match status" value="1"/>
</dbReference>
<sequence length="140" mass="14849">MSVLSEFKAFAVKGNVVDLAVGVIIGGAFGKIVESLVGDVIMPIVSKIFGGLDFSNYFIPLAGQTATTLVEAKKAGAVLAYGSFITVAINFMILAFIIFMMIKQINRLQSAPAPAPAPAEPPPPAEDIVLLREIRDSLKR</sequence>